<sequence length="189" mass="20673">MVKVIASSLRKGNVVDKDGKLYVILFAENIHPGKGTPVTQLDMRRIGDGVKVSERYRTTEQVERAYVEEREHTFLYADGEGFHFMNPETYDQVAVSEAVVGDAAPYLQEGMPVQVSQFNGIAISLVLPQRATFEVVETEPTTKGQTASSSYKPAVLSNGVRTAVPPHIAPGTRVVVMTADGSYVERAKD</sequence>
<organism>
    <name type="scientific">Mesorhizobium japonicum (strain LMG 29417 / CECT 9101 / MAFF 303099)</name>
    <name type="common">Mesorhizobium loti (strain MAFF 303099)</name>
    <dbReference type="NCBI Taxonomy" id="266835"/>
    <lineage>
        <taxon>Bacteria</taxon>
        <taxon>Pseudomonadati</taxon>
        <taxon>Pseudomonadota</taxon>
        <taxon>Alphaproteobacteria</taxon>
        <taxon>Hyphomicrobiales</taxon>
        <taxon>Phyllobacteriaceae</taxon>
        <taxon>Mesorhizobium</taxon>
    </lineage>
</organism>
<gene>
    <name evidence="1" type="primary">efp2</name>
    <name type="ordered locus">mll8261</name>
</gene>
<name>EFP2_RHILO</name>
<proteinExistence type="inferred from homology"/>
<dbReference type="EMBL" id="BA000012">
    <property type="protein sequence ID" value="BAB53855.1"/>
    <property type="molecule type" value="Genomic_DNA"/>
</dbReference>
<dbReference type="SMR" id="Q983M5"/>
<dbReference type="KEGG" id="mlo:mll8261"/>
<dbReference type="eggNOG" id="COG0231">
    <property type="taxonomic scope" value="Bacteria"/>
</dbReference>
<dbReference type="HOGENOM" id="CLU_074944_1_1_5"/>
<dbReference type="UniPathway" id="UPA00345"/>
<dbReference type="Proteomes" id="UP000000552">
    <property type="component" value="Chromosome"/>
</dbReference>
<dbReference type="GO" id="GO:0005737">
    <property type="term" value="C:cytoplasm"/>
    <property type="evidence" value="ECO:0007669"/>
    <property type="project" value="UniProtKB-SubCell"/>
</dbReference>
<dbReference type="GO" id="GO:0003746">
    <property type="term" value="F:translation elongation factor activity"/>
    <property type="evidence" value="ECO:0007669"/>
    <property type="project" value="UniProtKB-UniRule"/>
</dbReference>
<dbReference type="GO" id="GO:0043043">
    <property type="term" value="P:peptide biosynthetic process"/>
    <property type="evidence" value="ECO:0007669"/>
    <property type="project" value="InterPro"/>
</dbReference>
<dbReference type="CDD" id="cd04470">
    <property type="entry name" value="S1_EF-P_repeat_1"/>
    <property type="match status" value="1"/>
</dbReference>
<dbReference type="CDD" id="cd05794">
    <property type="entry name" value="S1_EF-P_repeat_2"/>
    <property type="match status" value="1"/>
</dbReference>
<dbReference type="FunFam" id="2.40.50.140:FF:000004">
    <property type="entry name" value="Elongation factor P"/>
    <property type="match status" value="1"/>
</dbReference>
<dbReference type="FunFam" id="2.40.50.140:FF:000009">
    <property type="entry name" value="Elongation factor P"/>
    <property type="match status" value="1"/>
</dbReference>
<dbReference type="Gene3D" id="2.30.30.30">
    <property type="match status" value="1"/>
</dbReference>
<dbReference type="Gene3D" id="2.40.50.140">
    <property type="entry name" value="Nucleic acid-binding proteins"/>
    <property type="match status" value="2"/>
</dbReference>
<dbReference type="HAMAP" id="MF_00141">
    <property type="entry name" value="EF_P"/>
    <property type="match status" value="1"/>
</dbReference>
<dbReference type="InterPro" id="IPR015365">
    <property type="entry name" value="Elong-fact-P_C"/>
</dbReference>
<dbReference type="InterPro" id="IPR012340">
    <property type="entry name" value="NA-bd_OB-fold"/>
</dbReference>
<dbReference type="InterPro" id="IPR014722">
    <property type="entry name" value="Rib_uL2_dom2"/>
</dbReference>
<dbReference type="InterPro" id="IPR020599">
    <property type="entry name" value="Transl_elong_fac_P/YeiP"/>
</dbReference>
<dbReference type="InterPro" id="IPR013185">
    <property type="entry name" value="Transl_elong_KOW-like"/>
</dbReference>
<dbReference type="InterPro" id="IPR001059">
    <property type="entry name" value="Transl_elong_P/YeiP_cen"/>
</dbReference>
<dbReference type="InterPro" id="IPR013852">
    <property type="entry name" value="Transl_elong_P/YeiP_CS"/>
</dbReference>
<dbReference type="InterPro" id="IPR011768">
    <property type="entry name" value="Transl_elongation_fac_P"/>
</dbReference>
<dbReference type="InterPro" id="IPR008991">
    <property type="entry name" value="Translation_prot_SH3-like_sf"/>
</dbReference>
<dbReference type="NCBIfam" id="TIGR00038">
    <property type="entry name" value="efp"/>
    <property type="match status" value="1"/>
</dbReference>
<dbReference type="NCBIfam" id="NF001810">
    <property type="entry name" value="PRK00529.1"/>
    <property type="match status" value="1"/>
</dbReference>
<dbReference type="PANTHER" id="PTHR30053">
    <property type="entry name" value="ELONGATION FACTOR P"/>
    <property type="match status" value="1"/>
</dbReference>
<dbReference type="PANTHER" id="PTHR30053:SF14">
    <property type="entry name" value="TRANSLATION ELONGATION FACTOR KOW-LIKE DOMAIN-CONTAINING PROTEIN"/>
    <property type="match status" value="1"/>
</dbReference>
<dbReference type="Pfam" id="PF01132">
    <property type="entry name" value="EFP"/>
    <property type="match status" value="1"/>
</dbReference>
<dbReference type="Pfam" id="PF08207">
    <property type="entry name" value="EFP_N"/>
    <property type="match status" value="1"/>
</dbReference>
<dbReference type="Pfam" id="PF09285">
    <property type="entry name" value="Elong-fact-P_C"/>
    <property type="match status" value="1"/>
</dbReference>
<dbReference type="PIRSF" id="PIRSF005901">
    <property type="entry name" value="EF-P"/>
    <property type="match status" value="1"/>
</dbReference>
<dbReference type="SMART" id="SM01185">
    <property type="entry name" value="EFP"/>
    <property type="match status" value="1"/>
</dbReference>
<dbReference type="SMART" id="SM00841">
    <property type="entry name" value="Elong-fact-P_C"/>
    <property type="match status" value="1"/>
</dbReference>
<dbReference type="SUPFAM" id="SSF50249">
    <property type="entry name" value="Nucleic acid-binding proteins"/>
    <property type="match status" value="2"/>
</dbReference>
<dbReference type="SUPFAM" id="SSF50104">
    <property type="entry name" value="Translation proteins SH3-like domain"/>
    <property type="match status" value="1"/>
</dbReference>
<dbReference type="PROSITE" id="PS01275">
    <property type="entry name" value="EFP"/>
    <property type="match status" value="1"/>
</dbReference>
<evidence type="ECO:0000255" key="1">
    <source>
        <dbReference type="HAMAP-Rule" id="MF_00141"/>
    </source>
</evidence>
<keyword id="KW-0963">Cytoplasm</keyword>
<keyword id="KW-0251">Elongation factor</keyword>
<keyword id="KW-0648">Protein biosynthesis</keyword>
<comment type="function">
    <text evidence="1">Involved in peptide bond synthesis. Stimulates efficient translation and peptide-bond synthesis on native or reconstituted 70S ribosomes in vitro. Probably functions indirectly by altering the affinity of the ribosome for aminoacyl-tRNA, thus increasing their reactivity as acceptors for peptidyl transferase.</text>
</comment>
<comment type="pathway">
    <text evidence="1">Protein biosynthesis; polypeptide chain elongation.</text>
</comment>
<comment type="subcellular location">
    <subcellularLocation>
        <location evidence="1">Cytoplasm</location>
    </subcellularLocation>
</comment>
<comment type="similarity">
    <text evidence="1">Belongs to the elongation factor P family.</text>
</comment>
<feature type="chain" id="PRO_0000094315" description="Elongation factor P 2">
    <location>
        <begin position="1"/>
        <end position="189"/>
    </location>
</feature>
<reference key="1">
    <citation type="journal article" date="2000" name="DNA Res.">
        <title>Complete genome structure of the nitrogen-fixing symbiotic bacterium Mesorhizobium loti.</title>
        <authorList>
            <person name="Kaneko T."/>
            <person name="Nakamura Y."/>
            <person name="Sato S."/>
            <person name="Asamizu E."/>
            <person name="Kato T."/>
            <person name="Sasamoto S."/>
            <person name="Watanabe A."/>
            <person name="Idesawa K."/>
            <person name="Ishikawa A."/>
            <person name="Kawashima K."/>
            <person name="Kimura T."/>
            <person name="Kishida Y."/>
            <person name="Kiyokawa C."/>
            <person name="Kohara M."/>
            <person name="Matsumoto M."/>
            <person name="Matsuno A."/>
            <person name="Mochizuki Y."/>
            <person name="Nakayama S."/>
            <person name="Nakazaki N."/>
            <person name="Shimpo S."/>
            <person name="Sugimoto M."/>
            <person name="Takeuchi C."/>
            <person name="Yamada M."/>
            <person name="Tabata S."/>
        </authorList>
    </citation>
    <scope>NUCLEOTIDE SEQUENCE [LARGE SCALE GENOMIC DNA]</scope>
    <source>
        <strain>LMG 29417 / CECT 9101 / MAFF 303099</strain>
    </source>
</reference>
<accession>Q983M5</accession>
<protein>
    <recommendedName>
        <fullName evidence="1">Elongation factor P 2</fullName>
        <shortName evidence="1">EF-P 2</shortName>
    </recommendedName>
</protein>